<accession>C3LS81</accession>
<name>PANC_VIBCM</name>
<proteinExistence type="inferred from homology"/>
<sequence length="293" mass="32855">MQVFADIAVLREQIKQIKREGRRVAFVPTMGNLHEGHLTLVRKARELADVVVVSIFVNPMQFDRAEDLKNYPRTLEEDLSKLNGEGVDLVLTPTPETMYPQGLDKQTFVEVPGLSYMLEGASRPGHFRGVATIVTKLFNIVQPDVACFGEKDFQQLAVIRQMVEDLCMDIEIVGVATVRELDGLAMSSRNNLLTLDERQRAPVLARTMRWISSAIRGGRDDYPSIIEDAVDQLRAADLEPDEIFIRDARTLLPISSESKQAVILMSAFLGKVRLIDNQVLDLQTDTKASSEEE</sequence>
<keyword id="KW-0067">ATP-binding</keyword>
<keyword id="KW-0963">Cytoplasm</keyword>
<keyword id="KW-0436">Ligase</keyword>
<keyword id="KW-0547">Nucleotide-binding</keyword>
<keyword id="KW-0566">Pantothenate biosynthesis</keyword>
<comment type="function">
    <text evidence="1">Catalyzes the condensation of pantoate with beta-alanine in an ATP-dependent reaction via a pantoyl-adenylate intermediate.</text>
</comment>
<comment type="catalytic activity">
    <reaction evidence="1">
        <text>(R)-pantoate + beta-alanine + ATP = (R)-pantothenate + AMP + diphosphate + H(+)</text>
        <dbReference type="Rhea" id="RHEA:10912"/>
        <dbReference type="ChEBI" id="CHEBI:15378"/>
        <dbReference type="ChEBI" id="CHEBI:15980"/>
        <dbReference type="ChEBI" id="CHEBI:29032"/>
        <dbReference type="ChEBI" id="CHEBI:30616"/>
        <dbReference type="ChEBI" id="CHEBI:33019"/>
        <dbReference type="ChEBI" id="CHEBI:57966"/>
        <dbReference type="ChEBI" id="CHEBI:456215"/>
        <dbReference type="EC" id="6.3.2.1"/>
    </reaction>
</comment>
<comment type="pathway">
    <text evidence="1">Cofactor biosynthesis; (R)-pantothenate biosynthesis; (R)-pantothenate from (R)-pantoate and beta-alanine: step 1/1.</text>
</comment>
<comment type="subunit">
    <text evidence="1">Homodimer.</text>
</comment>
<comment type="subcellular location">
    <subcellularLocation>
        <location evidence="1">Cytoplasm</location>
    </subcellularLocation>
</comment>
<comment type="miscellaneous">
    <text evidence="1">The reaction proceeds by a bi uni uni bi ping pong mechanism.</text>
</comment>
<comment type="similarity">
    <text evidence="1">Belongs to the pantothenate synthetase family.</text>
</comment>
<feature type="chain" id="PRO_1000123425" description="Pantothenate synthetase">
    <location>
        <begin position="1"/>
        <end position="293"/>
    </location>
</feature>
<feature type="active site" description="Proton donor" evidence="1">
    <location>
        <position position="37"/>
    </location>
</feature>
<feature type="binding site" evidence="1">
    <location>
        <begin position="30"/>
        <end position="37"/>
    </location>
    <ligand>
        <name>ATP</name>
        <dbReference type="ChEBI" id="CHEBI:30616"/>
    </ligand>
</feature>
<feature type="binding site" evidence="1">
    <location>
        <position position="61"/>
    </location>
    <ligand>
        <name>(R)-pantoate</name>
        <dbReference type="ChEBI" id="CHEBI:15980"/>
    </ligand>
</feature>
<feature type="binding site" evidence="1">
    <location>
        <position position="61"/>
    </location>
    <ligand>
        <name>beta-alanine</name>
        <dbReference type="ChEBI" id="CHEBI:57966"/>
    </ligand>
</feature>
<feature type="binding site" evidence="1">
    <location>
        <begin position="149"/>
        <end position="152"/>
    </location>
    <ligand>
        <name>ATP</name>
        <dbReference type="ChEBI" id="CHEBI:30616"/>
    </ligand>
</feature>
<feature type="binding site" evidence="1">
    <location>
        <position position="155"/>
    </location>
    <ligand>
        <name>(R)-pantoate</name>
        <dbReference type="ChEBI" id="CHEBI:15980"/>
    </ligand>
</feature>
<feature type="binding site" evidence="1">
    <location>
        <position position="178"/>
    </location>
    <ligand>
        <name>ATP</name>
        <dbReference type="ChEBI" id="CHEBI:30616"/>
    </ligand>
</feature>
<feature type="binding site" evidence="1">
    <location>
        <begin position="186"/>
        <end position="189"/>
    </location>
    <ligand>
        <name>ATP</name>
        <dbReference type="ChEBI" id="CHEBI:30616"/>
    </ligand>
</feature>
<reference key="1">
    <citation type="journal article" date="2008" name="PLoS ONE">
        <title>A recalibrated molecular clock and independent origins for the cholera pandemic clones.</title>
        <authorList>
            <person name="Feng L."/>
            <person name="Reeves P.R."/>
            <person name="Lan R."/>
            <person name="Ren Y."/>
            <person name="Gao C."/>
            <person name="Zhou Z."/>
            <person name="Ren Y."/>
            <person name="Cheng J."/>
            <person name="Wang W."/>
            <person name="Wang J."/>
            <person name="Qian W."/>
            <person name="Li D."/>
            <person name="Wang L."/>
        </authorList>
    </citation>
    <scope>NUCLEOTIDE SEQUENCE [LARGE SCALE GENOMIC DNA]</scope>
    <source>
        <strain>M66-2</strain>
    </source>
</reference>
<organism>
    <name type="scientific">Vibrio cholerae serotype O1 (strain M66-2)</name>
    <dbReference type="NCBI Taxonomy" id="579112"/>
    <lineage>
        <taxon>Bacteria</taxon>
        <taxon>Pseudomonadati</taxon>
        <taxon>Pseudomonadota</taxon>
        <taxon>Gammaproteobacteria</taxon>
        <taxon>Vibrionales</taxon>
        <taxon>Vibrionaceae</taxon>
        <taxon>Vibrio</taxon>
    </lineage>
</organism>
<dbReference type="EC" id="6.3.2.1" evidence="1"/>
<dbReference type="EMBL" id="CP001233">
    <property type="protein sequence ID" value="ACP04874.1"/>
    <property type="molecule type" value="Genomic_DNA"/>
</dbReference>
<dbReference type="RefSeq" id="WP_001195750.1">
    <property type="nucleotide sequence ID" value="NC_012578.1"/>
</dbReference>
<dbReference type="SMR" id="C3LS81"/>
<dbReference type="KEGG" id="vcm:VCM66_0549"/>
<dbReference type="HOGENOM" id="CLU_047148_0_0_6"/>
<dbReference type="UniPathway" id="UPA00028">
    <property type="reaction ID" value="UER00005"/>
</dbReference>
<dbReference type="Proteomes" id="UP000001217">
    <property type="component" value="Chromosome I"/>
</dbReference>
<dbReference type="GO" id="GO:0005829">
    <property type="term" value="C:cytosol"/>
    <property type="evidence" value="ECO:0007669"/>
    <property type="project" value="TreeGrafter"/>
</dbReference>
<dbReference type="GO" id="GO:0005524">
    <property type="term" value="F:ATP binding"/>
    <property type="evidence" value="ECO:0007669"/>
    <property type="project" value="UniProtKB-KW"/>
</dbReference>
<dbReference type="GO" id="GO:0004592">
    <property type="term" value="F:pantoate-beta-alanine ligase activity"/>
    <property type="evidence" value="ECO:0007669"/>
    <property type="project" value="UniProtKB-UniRule"/>
</dbReference>
<dbReference type="GO" id="GO:0015940">
    <property type="term" value="P:pantothenate biosynthetic process"/>
    <property type="evidence" value="ECO:0007669"/>
    <property type="project" value="UniProtKB-UniRule"/>
</dbReference>
<dbReference type="CDD" id="cd00560">
    <property type="entry name" value="PanC"/>
    <property type="match status" value="1"/>
</dbReference>
<dbReference type="FunFam" id="3.30.1300.10:FF:000004">
    <property type="entry name" value="Pantothenate synthetase"/>
    <property type="match status" value="1"/>
</dbReference>
<dbReference type="FunFam" id="3.40.50.620:FF:000013">
    <property type="entry name" value="Pantothenate synthetase"/>
    <property type="match status" value="1"/>
</dbReference>
<dbReference type="Gene3D" id="3.40.50.620">
    <property type="entry name" value="HUPs"/>
    <property type="match status" value="1"/>
</dbReference>
<dbReference type="Gene3D" id="3.30.1300.10">
    <property type="entry name" value="Pantoate-beta-alanine ligase, C-terminal domain"/>
    <property type="match status" value="1"/>
</dbReference>
<dbReference type="HAMAP" id="MF_00158">
    <property type="entry name" value="PanC"/>
    <property type="match status" value="1"/>
</dbReference>
<dbReference type="InterPro" id="IPR004821">
    <property type="entry name" value="Cyt_trans-like"/>
</dbReference>
<dbReference type="InterPro" id="IPR003721">
    <property type="entry name" value="Pantoate_ligase"/>
</dbReference>
<dbReference type="InterPro" id="IPR042176">
    <property type="entry name" value="Pantoate_ligase_C"/>
</dbReference>
<dbReference type="InterPro" id="IPR014729">
    <property type="entry name" value="Rossmann-like_a/b/a_fold"/>
</dbReference>
<dbReference type="NCBIfam" id="TIGR00125">
    <property type="entry name" value="cyt_tran_rel"/>
    <property type="match status" value="1"/>
</dbReference>
<dbReference type="NCBIfam" id="TIGR00018">
    <property type="entry name" value="panC"/>
    <property type="match status" value="1"/>
</dbReference>
<dbReference type="PANTHER" id="PTHR21299">
    <property type="entry name" value="CYTIDYLATE KINASE/PANTOATE-BETA-ALANINE LIGASE"/>
    <property type="match status" value="1"/>
</dbReference>
<dbReference type="PANTHER" id="PTHR21299:SF1">
    <property type="entry name" value="PANTOATE--BETA-ALANINE LIGASE"/>
    <property type="match status" value="1"/>
</dbReference>
<dbReference type="Pfam" id="PF02569">
    <property type="entry name" value="Pantoate_ligase"/>
    <property type="match status" value="1"/>
</dbReference>
<dbReference type="SUPFAM" id="SSF52374">
    <property type="entry name" value="Nucleotidylyl transferase"/>
    <property type="match status" value="1"/>
</dbReference>
<protein>
    <recommendedName>
        <fullName evidence="1">Pantothenate synthetase</fullName>
        <shortName evidence="1">PS</shortName>
        <ecNumber evidence="1">6.3.2.1</ecNumber>
    </recommendedName>
    <alternativeName>
        <fullName evidence="1">Pantoate--beta-alanine ligase</fullName>
    </alternativeName>
    <alternativeName>
        <fullName evidence="1">Pantoate-activating enzyme</fullName>
    </alternativeName>
</protein>
<evidence type="ECO:0000255" key="1">
    <source>
        <dbReference type="HAMAP-Rule" id="MF_00158"/>
    </source>
</evidence>
<gene>
    <name evidence="1" type="primary">panC</name>
    <name type="ordered locus">VCM66_0549</name>
</gene>